<comment type="function">
    <text evidence="2">Mitotic serine/threonine kinases that contributes to the regulation of cell cycle progression (By similarity). Associates with the centrosome and the spindle microtubules during mitosis and plays a critical role in various mitotic events including the establishment of mitotic spindle, centrosome duplication, centrosome separation as well as maturation, chromosomal alignment, spindle assembly checkpoint, and cytokinesis (By similarity). Phosphorylates numerous target proteins (By similarity). Important for microtubule formation and/or stabilization (By similarity).</text>
</comment>
<comment type="catalytic activity">
    <reaction evidence="2">
        <text>L-seryl-[protein] + ATP = O-phospho-L-seryl-[protein] + ADP + H(+)</text>
        <dbReference type="Rhea" id="RHEA:17989"/>
        <dbReference type="Rhea" id="RHEA-COMP:9863"/>
        <dbReference type="Rhea" id="RHEA-COMP:11604"/>
        <dbReference type="ChEBI" id="CHEBI:15378"/>
        <dbReference type="ChEBI" id="CHEBI:29999"/>
        <dbReference type="ChEBI" id="CHEBI:30616"/>
        <dbReference type="ChEBI" id="CHEBI:83421"/>
        <dbReference type="ChEBI" id="CHEBI:456216"/>
        <dbReference type="EC" id="2.7.11.1"/>
    </reaction>
</comment>
<comment type="catalytic activity">
    <reaction evidence="2">
        <text>L-threonyl-[protein] + ATP = O-phospho-L-threonyl-[protein] + ADP + H(+)</text>
        <dbReference type="Rhea" id="RHEA:46608"/>
        <dbReference type="Rhea" id="RHEA-COMP:11060"/>
        <dbReference type="Rhea" id="RHEA-COMP:11605"/>
        <dbReference type="ChEBI" id="CHEBI:15378"/>
        <dbReference type="ChEBI" id="CHEBI:30013"/>
        <dbReference type="ChEBI" id="CHEBI:30616"/>
        <dbReference type="ChEBI" id="CHEBI:61977"/>
        <dbReference type="ChEBI" id="CHEBI:456216"/>
        <dbReference type="EC" id="2.7.11.1"/>
    </reaction>
</comment>
<comment type="subunit">
    <text evidence="2">Interacts with kif2c and kif11.</text>
</comment>
<comment type="subcellular location">
    <subcellularLocation>
        <location evidence="2">Cytoplasm</location>
        <location evidence="2">Cytoskeleton</location>
        <location evidence="2">Spindle pole</location>
    </subcellularLocation>
    <subcellularLocation>
        <location evidence="2">Cytoplasm</location>
        <location evidence="2">Cytoskeleton</location>
        <location evidence="2">Microtubule organizing center</location>
        <location evidence="2">Centrosome</location>
    </subcellularLocation>
    <text evidence="2">Localizes to the spindle pole during mitosis especially from prophase through anaphase (By similarity). Partially colocalized with gamma tubulin in the centrosome, from S to M phase (By similarity).</text>
</comment>
<comment type="PTM">
    <text evidence="2">Phosphorylated (By similarity). Autophosphorylated on a serine residue (By similarity).</text>
</comment>
<comment type="similarity">
    <text evidence="3">Belongs to the protein kinase superfamily. Ser/Thr protein kinase family. Aurora subfamily.</text>
</comment>
<comment type="sequence caution" evidence="6">
    <conflict type="erroneous initiation">
        <sequence resource="EMBL-CDS" id="CAA78914"/>
    </conflict>
    <text>Truncated N-terminus.</text>
</comment>
<keyword id="KW-0067">ATP-binding</keyword>
<keyword id="KW-0131">Cell cycle</keyword>
<keyword id="KW-0132">Cell division</keyword>
<keyword id="KW-0963">Cytoplasm</keyword>
<keyword id="KW-0206">Cytoskeleton</keyword>
<keyword id="KW-0418">Kinase</keyword>
<keyword id="KW-0493">Microtubule</keyword>
<keyword id="KW-0498">Mitosis</keyword>
<keyword id="KW-0547">Nucleotide-binding</keyword>
<keyword id="KW-0597">Phosphoprotein</keyword>
<keyword id="KW-1185">Reference proteome</keyword>
<keyword id="KW-0723">Serine/threonine-protein kinase</keyword>
<keyword id="KW-0808">Transferase</keyword>
<feature type="chain" id="PRO_0000086696" description="Aurora kinase A-B">
    <location>
        <begin position="1"/>
        <end position="408"/>
    </location>
</feature>
<feature type="domain" description="Protein kinase" evidence="3">
    <location>
        <begin position="140"/>
        <end position="390"/>
    </location>
</feature>
<feature type="region of interest" description="Disordered" evidence="5">
    <location>
        <begin position="1"/>
        <end position="128"/>
    </location>
</feature>
<feature type="region of interest" description="Activation segment" evidence="1">
    <location>
        <begin position="287"/>
        <end position="300"/>
    </location>
</feature>
<feature type="compositionally biased region" description="Basic and acidic residues" evidence="5">
    <location>
        <begin position="1"/>
        <end position="10"/>
    </location>
</feature>
<feature type="compositionally biased region" description="Polar residues" evidence="5">
    <location>
        <begin position="85"/>
        <end position="110"/>
    </location>
</feature>
<feature type="active site" description="Proton acceptor" evidence="3 4">
    <location>
        <position position="263"/>
    </location>
</feature>
<feature type="binding site" evidence="3">
    <location>
        <position position="150"/>
    </location>
    <ligand>
        <name>ATP</name>
        <dbReference type="ChEBI" id="CHEBI:30616"/>
    </ligand>
</feature>
<feature type="binding site" evidence="3">
    <location>
        <position position="169"/>
    </location>
    <ligand>
        <name>ATP</name>
        <dbReference type="ChEBI" id="CHEBI:30616"/>
    </ligand>
</feature>
<feature type="binding site" evidence="3">
    <location>
        <begin position="217"/>
        <end position="220"/>
    </location>
    <ligand>
        <name>ATP</name>
        <dbReference type="ChEBI" id="CHEBI:30616"/>
    </ligand>
</feature>
<feature type="binding site" evidence="3">
    <location>
        <position position="281"/>
    </location>
    <ligand>
        <name>ATP</name>
        <dbReference type="ChEBI" id="CHEBI:30616"/>
    </ligand>
</feature>
<feature type="sequence conflict" description="In Ref. 1; CAA78914." evidence="6" ref="1">
    <original>C</original>
    <variation>S</variation>
    <location>
        <position position="211"/>
    </location>
</feature>
<dbReference type="EC" id="2.7.11.1"/>
<dbReference type="EMBL" id="Z17206">
    <property type="protein sequence ID" value="CAA78914.1"/>
    <property type="status" value="ALT_INIT"/>
    <property type="molecule type" value="mRNA"/>
</dbReference>
<dbReference type="EMBL" id="BC075177">
    <property type="protein sequence ID" value="AAH75177.1"/>
    <property type="molecule type" value="mRNA"/>
</dbReference>
<dbReference type="SMR" id="Q91819"/>
<dbReference type="BioGRID" id="99681">
    <property type="interactions" value="1"/>
</dbReference>
<dbReference type="IntAct" id="Q91819">
    <property type="interactions" value="1"/>
</dbReference>
<dbReference type="iPTMnet" id="Q91819"/>
<dbReference type="GeneID" id="398349"/>
<dbReference type="KEGG" id="xla:398349"/>
<dbReference type="AGR" id="Xenbase:XB-GENE-17337404"/>
<dbReference type="CTD" id="398349"/>
<dbReference type="Xenbase" id="XB-GENE-17337404">
    <property type="gene designation" value="aurka.S"/>
</dbReference>
<dbReference type="OrthoDB" id="377346at2759"/>
<dbReference type="Proteomes" id="UP000186698">
    <property type="component" value="Chromosome 9_10S"/>
</dbReference>
<dbReference type="Bgee" id="398349">
    <property type="expression patterns" value="Expressed in egg cell and 19 other cell types or tissues"/>
</dbReference>
<dbReference type="GO" id="GO:0005813">
    <property type="term" value="C:centrosome"/>
    <property type="evidence" value="ECO:0000250"/>
    <property type="project" value="UniProtKB"/>
</dbReference>
<dbReference type="GO" id="GO:0032133">
    <property type="term" value="C:chromosome passenger complex"/>
    <property type="evidence" value="ECO:0000318"/>
    <property type="project" value="GO_Central"/>
</dbReference>
<dbReference type="GO" id="GO:0005737">
    <property type="term" value="C:cytoplasm"/>
    <property type="evidence" value="ECO:0000250"/>
    <property type="project" value="UniProtKB"/>
</dbReference>
<dbReference type="GO" id="GO:0000776">
    <property type="term" value="C:kinetochore"/>
    <property type="evidence" value="ECO:0000318"/>
    <property type="project" value="GO_Central"/>
</dbReference>
<dbReference type="GO" id="GO:0005634">
    <property type="term" value="C:nucleus"/>
    <property type="evidence" value="ECO:0000318"/>
    <property type="project" value="GO_Central"/>
</dbReference>
<dbReference type="GO" id="GO:0005876">
    <property type="term" value="C:spindle microtubule"/>
    <property type="evidence" value="ECO:0000250"/>
    <property type="project" value="UniProtKB"/>
</dbReference>
<dbReference type="GO" id="GO:0051233">
    <property type="term" value="C:spindle midzone"/>
    <property type="evidence" value="ECO:0000318"/>
    <property type="project" value="GO_Central"/>
</dbReference>
<dbReference type="GO" id="GO:0000922">
    <property type="term" value="C:spindle pole"/>
    <property type="evidence" value="ECO:0000250"/>
    <property type="project" value="UniProtKB"/>
</dbReference>
<dbReference type="GO" id="GO:0005524">
    <property type="term" value="F:ATP binding"/>
    <property type="evidence" value="ECO:0007669"/>
    <property type="project" value="UniProtKB-KW"/>
</dbReference>
<dbReference type="GO" id="GO:0019894">
    <property type="term" value="F:kinesin binding"/>
    <property type="evidence" value="ECO:0000250"/>
    <property type="project" value="UniProtKB"/>
</dbReference>
<dbReference type="GO" id="GO:0008017">
    <property type="term" value="F:microtubule binding"/>
    <property type="evidence" value="ECO:0000250"/>
    <property type="project" value="UniProtKB"/>
</dbReference>
<dbReference type="GO" id="GO:0004672">
    <property type="term" value="F:protein kinase activity"/>
    <property type="evidence" value="ECO:0000250"/>
    <property type="project" value="UniProtKB"/>
</dbReference>
<dbReference type="GO" id="GO:0106310">
    <property type="term" value="F:protein serine kinase activity"/>
    <property type="evidence" value="ECO:0007669"/>
    <property type="project" value="RHEA"/>
</dbReference>
<dbReference type="GO" id="GO:0004674">
    <property type="term" value="F:protein serine/threonine kinase activity"/>
    <property type="evidence" value="ECO:0000250"/>
    <property type="project" value="UniProtKB"/>
</dbReference>
<dbReference type="GO" id="GO:0051301">
    <property type="term" value="P:cell division"/>
    <property type="evidence" value="ECO:0007669"/>
    <property type="project" value="UniProtKB-KW"/>
</dbReference>
<dbReference type="GO" id="GO:0000212">
    <property type="term" value="P:meiotic spindle organization"/>
    <property type="evidence" value="ECO:0007669"/>
    <property type="project" value="InterPro"/>
</dbReference>
<dbReference type="GO" id="GO:0007100">
    <property type="term" value="P:mitotic centrosome separation"/>
    <property type="evidence" value="ECO:0007669"/>
    <property type="project" value="InterPro"/>
</dbReference>
<dbReference type="GO" id="GO:0090307">
    <property type="term" value="P:mitotic spindle assembly"/>
    <property type="evidence" value="ECO:0000250"/>
    <property type="project" value="UniProtKB"/>
</dbReference>
<dbReference type="GO" id="GO:0007052">
    <property type="term" value="P:mitotic spindle organization"/>
    <property type="evidence" value="ECO:0000318"/>
    <property type="project" value="GO_Central"/>
</dbReference>
<dbReference type="GO" id="GO:0018105">
    <property type="term" value="P:peptidyl-serine phosphorylation"/>
    <property type="evidence" value="ECO:0000250"/>
    <property type="project" value="UniProtKB"/>
</dbReference>
<dbReference type="GO" id="GO:0046777">
    <property type="term" value="P:protein autophosphorylation"/>
    <property type="evidence" value="ECO:0000250"/>
    <property type="project" value="UniProtKB"/>
</dbReference>
<dbReference type="GO" id="GO:0032465">
    <property type="term" value="P:regulation of cytokinesis"/>
    <property type="evidence" value="ECO:0000318"/>
    <property type="project" value="GO_Central"/>
</dbReference>
<dbReference type="CDD" id="cd14116">
    <property type="entry name" value="STKc_Aurora-A"/>
    <property type="match status" value="1"/>
</dbReference>
<dbReference type="FunFam" id="3.30.200.20:FF:000042">
    <property type="entry name" value="Aurora kinase A"/>
    <property type="match status" value="1"/>
</dbReference>
<dbReference type="FunFam" id="1.10.510.10:FF:000235">
    <property type="entry name" value="Serine/threonine-protein kinase ark1"/>
    <property type="match status" value="1"/>
</dbReference>
<dbReference type="Gene3D" id="3.30.200.20">
    <property type="entry name" value="Phosphorylase Kinase, domain 1"/>
    <property type="match status" value="1"/>
</dbReference>
<dbReference type="Gene3D" id="1.10.510.10">
    <property type="entry name" value="Transferase(Phosphotransferase) domain 1"/>
    <property type="match status" value="1"/>
</dbReference>
<dbReference type="InterPro" id="IPR030616">
    <property type="entry name" value="Aur-like"/>
</dbReference>
<dbReference type="InterPro" id="IPR030611">
    <property type="entry name" value="AURKA"/>
</dbReference>
<dbReference type="InterPro" id="IPR011009">
    <property type="entry name" value="Kinase-like_dom_sf"/>
</dbReference>
<dbReference type="InterPro" id="IPR000719">
    <property type="entry name" value="Prot_kinase_dom"/>
</dbReference>
<dbReference type="InterPro" id="IPR017441">
    <property type="entry name" value="Protein_kinase_ATP_BS"/>
</dbReference>
<dbReference type="InterPro" id="IPR008271">
    <property type="entry name" value="Ser/Thr_kinase_AS"/>
</dbReference>
<dbReference type="PANTHER" id="PTHR24350">
    <property type="entry name" value="SERINE/THREONINE-PROTEIN KINASE IAL-RELATED"/>
    <property type="match status" value="1"/>
</dbReference>
<dbReference type="Pfam" id="PF00069">
    <property type="entry name" value="Pkinase"/>
    <property type="match status" value="1"/>
</dbReference>
<dbReference type="SMART" id="SM00220">
    <property type="entry name" value="S_TKc"/>
    <property type="match status" value="1"/>
</dbReference>
<dbReference type="SUPFAM" id="SSF56112">
    <property type="entry name" value="Protein kinase-like (PK-like)"/>
    <property type="match status" value="1"/>
</dbReference>
<dbReference type="PROSITE" id="PS00107">
    <property type="entry name" value="PROTEIN_KINASE_ATP"/>
    <property type="match status" value="1"/>
</dbReference>
<dbReference type="PROSITE" id="PS50011">
    <property type="entry name" value="PROTEIN_KINASE_DOM"/>
    <property type="match status" value="1"/>
</dbReference>
<dbReference type="PROSITE" id="PS00108">
    <property type="entry name" value="PROTEIN_KINASE_ST"/>
    <property type="match status" value="1"/>
</dbReference>
<name>AURAB_XENLA</name>
<reference key="1">
    <citation type="submission" date="1992-10" db="EMBL/GenBank/DDBJ databases">
        <title>Eg2, selected by differential screening encodes a new Xenopus protein kinase family.</title>
        <authorList>
            <person name="Roghi C."/>
            <person name="Le Guellec R."/>
            <person name="Paris J."/>
            <person name="Couturier A."/>
            <person name="Philippe M."/>
        </authorList>
    </citation>
    <scope>NUCLEOTIDE SEQUENCE [MRNA]</scope>
    <source>
        <tissue>Egg</tissue>
    </source>
</reference>
<reference key="2">
    <citation type="submission" date="2004-06" db="EMBL/GenBank/DDBJ databases">
        <authorList>
            <consortium name="NIH - Xenopus Gene Collection (XGC) project"/>
        </authorList>
    </citation>
    <scope>NUCLEOTIDE SEQUENCE [LARGE SCALE MRNA]</scope>
    <source>
        <tissue>Kidney</tissue>
    </source>
</reference>
<evidence type="ECO:0000250" key="1">
    <source>
        <dbReference type="UniProtKB" id="O14965"/>
    </source>
</evidence>
<evidence type="ECO:0000250" key="2">
    <source>
        <dbReference type="UniProtKB" id="Q91820"/>
    </source>
</evidence>
<evidence type="ECO:0000255" key="3">
    <source>
        <dbReference type="PROSITE-ProRule" id="PRU00159"/>
    </source>
</evidence>
<evidence type="ECO:0000255" key="4">
    <source>
        <dbReference type="PROSITE-ProRule" id="PRU10027"/>
    </source>
</evidence>
<evidence type="ECO:0000256" key="5">
    <source>
        <dbReference type="SAM" id="MobiDB-lite"/>
    </source>
</evidence>
<evidence type="ECO:0000305" key="6"/>
<accession>Q91819</accession>
<accession>Q6DJK0</accession>
<proteinExistence type="evidence at transcript level"/>
<gene>
    <name type="primary">aurka-b</name>
    <name type="synonym">aurka</name>
    <name type="synonym">eg2</name>
    <name type="synonym">stk6</name>
</gene>
<organism>
    <name type="scientific">Xenopus laevis</name>
    <name type="common">African clawed frog</name>
    <dbReference type="NCBI Taxonomy" id="8355"/>
    <lineage>
        <taxon>Eukaryota</taxon>
        <taxon>Metazoa</taxon>
        <taxon>Chordata</taxon>
        <taxon>Craniata</taxon>
        <taxon>Vertebrata</taxon>
        <taxon>Euteleostomi</taxon>
        <taxon>Amphibia</taxon>
        <taxon>Batrachia</taxon>
        <taxon>Anura</taxon>
        <taxon>Pipoidea</taxon>
        <taxon>Pipidae</taxon>
        <taxon>Xenopodinae</taxon>
        <taxon>Xenopus</taxon>
        <taxon>Xenopus</taxon>
    </lineage>
</organism>
<sequence length="408" mass="46477">MERAVKENHKPSNVKVFHPMTEGPKRIPVSQPPSTQVRPPVTGVSAQRILGPSNVPQRVMMQAQKPVLSNQKPTAQGLLRPATHGHQTSKPQGPNENRNPQQTSHSSTPNMEKKGSTDQGKTLAVPKEEGKKKQWCLEDFEIGRPLGKGKFGNVYLARERESKFILALKVLFKSQLEKAGVEHQLRREVEIQSHLRHPNILRLYGYFHDACRVYLILDYAPGGELFRELQKCTRFDDQRSALYIKQLAEALLYCHSKKVIHRDIKPENLLLGSNGELKIADFGWSVHAPSSRRTTLCGTLDYLPPEMIEGRMHDEKVDLWSLGVLCYEFLVGKPPFETDTHQETYRRISKVEFQYPPYVSEEAKDLVSKLLKHNPNHRLPLKGVLEHPWIVKNSQQPKKKDEPLAGAQ</sequence>
<protein>
    <recommendedName>
        <fullName>Aurora kinase A-B</fullName>
        <ecNumber>2.7.11.1</ecNumber>
    </recommendedName>
    <alternativeName>
        <fullName>Aurora/IPL1-related kinase 1</fullName>
        <shortName>ARK-1</shortName>
        <shortName>Aurora-related kinase 1</shortName>
    </alternativeName>
    <alternativeName>
        <fullName>Serine/threonine-protein kinase 6-B</fullName>
    </alternativeName>
    <alternativeName>
        <fullName>Serine/threonine-protein kinase Eg2-B</fullName>
    </alternativeName>
    <alternativeName>
        <fullName>Serine/threonine-protein kinase aurora-A</fullName>
    </alternativeName>
    <alternativeName>
        <fullName>p46XlEg22</fullName>
    </alternativeName>
</protein>